<keyword id="KW-0903">Direct protein sequencing</keyword>
<keyword id="KW-1015">Disulfide bond</keyword>
<keyword id="KW-0445">Lipid transport</keyword>
<keyword id="KW-0446">Lipid-binding</keyword>
<keyword id="KW-1185">Reference proteome</keyword>
<keyword id="KW-0813">Transport</keyword>
<organism evidence="4">
    <name type="scientific">Zea mays</name>
    <name type="common">Maize</name>
    <dbReference type="NCBI Taxonomy" id="4577"/>
    <lineage>
        <taxon>Eukaryota</taxon>
        <taxon>Viridiplantae</taxon>
        <taxon>Streptophyta</taxon>
        <taxon>Embryophyta</taxon>
        <taxon>Tracheophyta</taxon>
        <taxon>Spermatophyta</taxon>
        <taxon>Magnoliopsida</taxon>
        <taxon>Liliopsida</taxon>
        <taxon>Poales</taxon>
        <taxon>Poaceae</taxon>
        <taxon>PACMAD clade</taxon>
        <taxon>Panicoideae</taxon>
        <taxon>Andropogonodae</taxon>
        <taxon>Andropogoneae</taxon>
        <taxon>Tripsacinae</taxon>
        <taxon>Zea</taxon>
    </lineage>
</organism>
<name>NLTP2_MAIZE</name>
<proteinExistence type="evidence at protein level"/>
<feature type="chain" id="PRO_0000153891" description="Probable non-specific lipid-transfer protein 2">
    <location>
        <begin position="1"/>
        <end position="70"/>
    </location>
</feature>
<feature type="disulfide bond" evidence="1">
    <location>
        <begin position="4"/>
        <end position="38"/>
    </location>
</feature>
<feature type="disulfide bond" evidence="1">
    <location>
        <begin position="12"/>
        <end position="26"/>
    </location>
</feature>
<feature type="disulfide bond" evidence="1">
    <location>
        <begin position="27"/>
        <end position="62"/>
    </location>
</feature>
<feature type="disulfide bond" evidence="1">
    <location>
        <begin position="36"/>
        <end position="69"/>
    </location>
</feature>
<reference key="1">
    <citation type="journal article" date="2003" name="J. Chromatogr. B">
        <title>Purification and characterization of a small (7.3 kDa) putative lipid transfer protein from maize seeds.</title>
        <authorList>
            <person name="Castro M.S."/>
            <person name="Gerhardt I.R."/>
            <person name="Orru S."/>
            <person name="Pucci P."/>
            <person name="Bloch C. Jr."/>
        </authorList>
    </citation>
    <scope>PROTEIN SEQUENCE</scope>
    <scope>MASS SPECTROMETRY</scope>
    <source>
        <tissue>Seed</tissue>
    </source>
</reference>
<accession>P83506</accession>
<evidence type="ECO:0000250" key="1"/>
<evidence type="ECO:0000250" key="2">
    <source>
        <dbReference type="UniProtKB" id="P20145"/>
    </source>
</evidence>
<evidence type="ECO:0000269" key="3">
    <source>
    </source>
</evidence>
<evidence type="ECO:0000305" key="4"/>
<comment type="function">
    <text evidence="2">Potential phospholipid transfer protein.</text>
</comment>
<comment type="mass spectrometry" mass="7303.83" method="Electrospray" evidence="3"/>
<comment type="similarity">
    <text evidence="4">Belongs to the plant LTP family. B11E subfamily.</text>
</comment>
<sequence length="70" mass="7312">ANPCNPAQLTPCAGPALFGGAVPPACCAQLRAQQGCLCGYARSPNYGSYIRSPNAARLFAICNLPMPRCR</sequence>
<protein>
    <recommendedName>
        <fullName>Probable non-specific lipid-transfer protein 2</fullName>
        <shortName>LTP 2</shortName>
    </recommendedName>
</protein>
<dbReference type="SMR" id="P83506"/>
<dbReference type="FunCoup" id="P83506">
    <property type="interactions" value="1"/>
</dbReference>
<dbReference type="STRING" id="4577.P83506"/>
<dbReference type="PaxDb" id="4577-GRMZM2G081464_P01"/>
<dbReference type="eggNOG" id="ENOG502R757">
    <property type="taxonomic scope" value="Eukaryota"/>
</dbReference>
<dbReference type="InParanoid" id="P83506"/>
<dbReference type="Proteomes" id="UP000007305">
    <property type="component" value="Unplaced"/>
</dbReference>
<dbReference type="ExpressionAtlas" id="P83506">
    <property type="expression patterns" value="baseline and differential"/>
</dbReference>
<dbReference type="GO" id="GO:0008289">
    <property type="term" value="F:lipid binding"/>
    <property type="evidence" value="ECO:0007669"/>
    <property type="project" value="UniProtKB-KW"/>
</dbReference>
<dbReference type="GO" id="GO:0006869">
    <property type="term" value="P:lipid transport"/>
    <property type="evidence" value="ECO:0007669"/>
    <property type="project" value="UniProtKB-KW"/>
</dbReference>
<dbReference type="CDD" id="cd01959">
    <property type="entry name" value="nsLTP2"/>
    <property type="match status" value="1"/>
</dbReference>
<dbReference type="Gene3D" id="1.10.110.10">
    <property type="entry name" value="Plant lipid-transfer and hydrophobic proteins"/>
    <property type="match status" value="1"/>
</dbReference>
<dbReference type="InterPro" id="IPR036312">
    <property type="entry name" value="Bifun_inhib/LTP/seed_sf"/>
</dbReference>
<dbReference type="InterPro" id="IPR016140">
    <property type="entry name" value="Bifunc_inhib/LTP/seed_store"/>
</dbReference>
<dbReference type="InterPro" id="IPR033872">
    <property type="entry name" value="nsLTP2"/>
</dbReference>
<dbReference type="PANTHER" id="PTHR33214">
    <property type="entry name" value="BIFUNCTIONAL INHIBITOR/LIPID-TRANSFER PROTEIN/SEED STORAGE 2S ALBUMIN SUPERFAMILY PROTEIN"/>
    <property type="match status" value="1"/>
</dbReference>
<dbReference type="PANTHER" id="PTHR33214:SF23">
    <property type="entry name" value="NON-SPECIFIC LIPID-TRANSFER PROTEIN 2-RELATED"/>
    <property type="match status" value="1"/>
</dbReference>
<dbReference type="Pfam" id="PF00234">
    <property type="entry name" value="Tryp_alpha_amyl"/>
    <property type="match status" value="1"/>
</dbReference>
<dbReference type="SMART" id="SM00499">
    <property type="entry name" value="AAI"/>
    <property type="match status" value="1"/>
</dbReference>
<dbReference type="SUPFAM" id="SSF47699">
    <property type="entry name" value="Bifunctional inhibitor/lipid-transfer protein/seed storage 2S albumin"/>
    <property type="match status" value="1"/>
</dbReference>